<keyword id="KW-0044">Antibiotic</keyword>
<keyword id="KW-0929">Antimicrobial</keyword>
<keyword id="KW-1015">Disulfide bond</keyword>
<keyword id="KW-0325">Glycoprotein</keyword>
<keyword id="KW-0391">Immunity</keyword>
<keyword id="KW-0399">Innate immunity</keyword>
<keyword id="KW-0964">Secreted</keyword>
<keyword id="KW-0732">Signal</keyword>
<organism evidence="12">
    <name type="scientific">Sebastes schlegelii</name>
    <name type="common">Korean rockfish</name>
    <dbReference type="NCBI Taxonomy" id="214486"/>
    <lineage>
        <taxon>Eukaryota</taxon>
        <taxon>Metazoa</taxon>
        <taxon>Chordata</taxon>
        <taxon>Craniata</taxon>
        <taxon>Vertebrata</taxon>
        <taxon>Euteleostomi</taxon>
        <taxon>Actinopterygii</taxon>
        <taxon>Neopterygii</taxon>
        <taxon>Teleostei</taxon>
        <taxon>Neoteleostei</taxon>
        <taxon>Acanthomorphata</taxon>
        <taxon>Eupercaria</taxon>
        <taxon>Perciformes</taxon>
        <taxon>Scorpaenoidei</taxon>
        <taxon>Sebastidae</taxon>
        <taxon>Sebastinae</taxon>
        <taxon>Sebastes</taxon>
    </lineage>
</organism>
<dbReference type="EMBL" id="KX856985">
    <property type="protein sequence ID" value="AQL41191.1"/>
    <property type="molecule type" value="mRNA"/>
</dbReference>
<dbReference type="EMBL" id="MH178402">
    <property type="protein sequence ID" value="QAV52898.1"/>
    <property type="molecule type" value="mRNA"/>
</dbReference>
<dbReference type="SMR" id="A0A481NSZ4"/>
<dbReference type="GO" id="GO:0005615">
    <property type="term" value="C:extracellular space"/>
    <property type="evidence" value="ECO:0007669"/>
    <property type="project" value="InterPro"/>
</dbReference>
<dbReference type="GO" id="GO:0008289">
    <property type="term" value="F:lipid binding"/>
    <property type="evidence" value="ECO:0007669"/>
    <property type="project" value="InterPro"/>
</dbReference>
<dbReference type="GO" id="GO:0042742">
    <property type="term" value="P:defense response to bacterium"/>
    <property type="evidence" value="ECO:0007669"/>
    <property type="project" value="UniProtKB-KW"/>
</dbReference>
<dbReference type="GO" id="GO:0045087">
    <property type="term" value="P:innate immune response"/>
    <property type="evidence" value="ECO:0007669"/>
    <property type="project" value="UniProtKB-KW"/>
</dbReference>
<dbReference type="CDD" id="cd00025">
    <property type="entry name" value="BPI1"/>
    <property type="match status" value="1"/>
</dbReference>
<dbReference type="FunFam" id="3.15.20.10:FF:000001">
    <property type="entry name" value="Phospholipid transfer protein"/>
    <property type="match status" value="1"/>
</dbReference>
<dbReference type="FunFam" id="3.15.10.10:FF:000001">
    <property type="entry name" value="phospholipid transfer protein-like"/>
    <property type="match status" value="1"/>
</dbReference>
<dbReference type="Gene3D" id="3.15.10.10">
    <property type="entry name" value="Bactericidal permeability-increasing protein, domain 1"/>
    <property type="match status" value="1"/>
</dbReference>
<dbReference type="Gene3D" id="3.15.20.10">
    <property type="entry name" value="Bactericidal permeability-increasing protein, domain 2"/>
    <property type="match status" value="1"/>
</dbReference>
<dbReference type="InterPro" id="IPR017943">
    <property type="entry name" value="Bactericidal_perm-incr_a/b_dom"/>
</dbReference>
<dbReference type="InterPro" id="IPR030675">
    <property type="entry name" value="BPI/LBP"/>
</dbReference>
<dbReference type="InterPro" id="IPR032942">
    <property type="entry name" value="BPI/LBP/Plunc"/>
</dbReference>
<dbReference type="InterPro" id="IPR001124">
    <property type="entry name" value="Lipid-bd_serum_glycop_C"/>
</dbReference>
<dbReference type="InterPro" id="IPR017942">
    <property type="entry name" value="Lipid-bd_serum_glycop_N"/>
</dbReference>
<dbReference type="PANTHER" id="PTHR10504">
    <property type="entry name" value="BACTERICIDAL PERMEABILITY-INCREASING BPI PROTEIN-RELATED"/>
    <property type="match status" value="1"/>
</dbReference>
<dbReference type="PANTHER" id="PTHR10504:SF84">
    <property type="entry name" value="BACTERICIDAL PERMEABILITY-INCREASING PROTEIN"/>
    <property type="match status" value="1"/>
</dbReference>
<dbReference type="Pfam" id="PF01273">
    <property type="entry name" value="LBP_BPI_CETP"/>
    <property type="match status" value="1"/>
</dbReference>
<dbReference type="Pfam" id="PF02886">
    <property type="entry name" value="LBP_BPI_CETP_C"/>
    <property type="match status" value="1"/>
</dbReference>
<dbReference type="PIRSF" id="PIRSF002417">
    <property type="entry name" value="Lipid_binding_protein"/>
    <property type="match status" value="1"/>
</dbReference>
<dbReference type="SMART" id="SM00328">
    <property type="entry name" value="BPI1"/>
    <property type="match status" value="1"/>
</dbReference>
<dbReference type="SMART" id="SM00329">
    <property type="entry name" value="BPI2"/>
    <property type="match status" value="1"/>
</dbReference>
<dbReference type="SUPFAM" id="SSF55394">
    <property type="entry name" value="Bactericidal permeability-increasing protein, BPI"/>
    <property type="match status" value="2"/>
</dbReference>
<gene>
    <name evidence="12" type="primary">BPI</name>
    <name evidence="12" type="synonym">LBP</name>
</gene>
<comment type="function">
    <text evidence="5 6 7">The cytotoxic action of BPI is limited to many species of Gram-negative bacteria; this specificity may be explained by a strong affinity of the very basic N-terminal half for the negatively charged lipopolysaccharides that are unique to the Gram-negative bacterial outer envelope (By similarity). Exhibits neutralizing capacity towards P.aeruginosa lipopolysaccharides (LPS) and has bactericidal activity against multiple drug resistant (MDR) P.aeruginosa strains derived from people with cystic fibrosis (PubMed:37461324). Has antibacterial activity against E.coli, but not against S.iniae (PubMed:27663679).</text>
</comment>
<comment type="subunit">
    <text evidence="5">Monomer. Homodimer; disulfide-linked.</text>
</comment>
<comment type="subcellular location">
    <subcellularLocation>
        <location evidence="5">Secreted</location>
    </subcellularLocation>
</comment>
<comment type="tissue specificity">
    <text evidence="6 8">Expressed in spleen (PubMed:27663679, Ref.1). Lower expression in gill, head kidney, entire kidney, skin, intestine and blood and lowest expression in liver and muscle (PubMed:27663679).</text>
</comment>
<comment type="induction">
    <text evidence="6">Up-regulated in response to pathogen stress, such as exposure to lipopolysaccharides (LPS) or S.iniae culture.</text>
</comment>
<comment type="domain">
    <text evidence="5">The N- and C-terminal barrels adopt an identical fold despite having only 13% of conserved residues.</text>
</comment>
<comment type="domain">
    <text evidence="5">The N-terminal region may be exposed to the interior of the granule, whereas the C-terminal portion may be embedded in the membrane. During phagocytosis and degranulation, proteases may be released and activated and cleave BPI at the junction of the N- and C-terminal portions of the molecule, providing controlled release of the N-terminal antibacterial fragment when bacteria are ingested.</text>
</comment>
<comment type="domain">
    <text evidence="6">The N-terminal domain exhibits antimicrobial activity against E.coli, but not against S.iniae (PubMed:27663679). Exhibits lipopolysaccharides (LPS)-binding ability in vitro (PubMed:27663679).</text>
</comment>
<comment type="biotechnology">
    <text evidence="7">May serve as an alternative to antibiotics in people with otherwise untreatable multiple drug resistant (MDR) bacterial infections (PubMed:37461324). Can escape recognition by human anti-neutrophil cytoplasmic autoantibodies (ANCA) directed against BPI (PubMed:37461324).</text>
</comment>
<comment type="similarity">
    <text evidence="10">Belongs to the BPI/LBP/Plunc superfamily. BPI/LBP family.</text>
</comment>
<reference evidence="11" key="1">
    <citation type="submission" date="2016-09" db="EMBL/GenBank/DDBJ databases">
        <title>Identification and characterization of a BPI/LBP homolog from black rockfish, Sebastes schlegelii.</title>
        <authorList>
            <person name="Zhang M."/>
            <person name="Liu Y."/>
        </authorList>
    </citation>
    <scope>NUCLEOTIDE SEQUENCE [MRNA]</scope>
    <scope>TISSUE SPECIFICITY</scope>
    <source>
        <tissue evidence="11">Spleen</tissue>
    </source>
</reference>
<reference evidence="12" key="2">
    <citation type="journal article" date="2017" name="Dev. Comp. Immunol.">
        <title>Molecular characterization of a bactericidal permeability-increasing protein/lipopolysaccharide-binding protein from black rockfish (Sebastes schlegelii): Deciphering its putative antibacterial role.</title>
        <authorList>
            <person name="Lee S."/>
            <person name="Elvitigala D.A.S."/>
            <person name="Lee S."/>
            <person name="Kim H.C."/>
            <person name="Park H.C."/>
            <person name="Lee J."/>
        </authorList>
    </citation>
    <scope>NUCLEOTIDE SEQUENCE [MRNA]</scope>
    <scope>FUNCTION</scope>
    <scope>TISSUE SPECIFICITY</scope>
    <scope>INDUCTION BY PATHOGEN STRESS</scope>
    <scope>DOMAIN</scope>
</reference>
<reference key="3">
    <citation type="journal article" date="2023" name="Elife">
        <title>Scorpionfish BPI is highly active against multiple drug-resistant Pseudomonas aeruginosa isolates from people with cystic fibrosis.</title>
        <authorList>
            <person name="Holzinger J.M."/>
            <person name="Toelge M."/>
            <person name="Werner M."/>
            <person name="Ederer K.U."/>
            <person name="Siegmund H.I."/>
            <person name="Peterhoff D."/>
            <person name="Blaas S.H."/>
            <person name="Gisch N."/>
            <person name="Brochhausen C."/>
            <person name="Gessner A."/>
            <person name="Buelow S."/>
        </authorList>
    </citation>
    <scope>FUNCTION</scope>
    <scope>BIOTECHNOLOGY</scope>
</reference>
<protein>
    <recommendedName>
        <fullName evidence="9">Bactericidal permeability-increasing protein</fullName>
        <shortName evidence="9">BPI</shortName>
    </recommendedName>
    <alternativeName>
        <fullName evidence="9">Lipopolysaccharide-binding protein</fullName>
        <shortName evidence="9">LBP</shortName>
    </alternativeName>
</protein>
<accession>A0A481NSZ4</accession>
<accession>A0A1Q1FEC9</accession>
<feature type="signal peptide" evidence="2">
    <location>
        <begin position="1"/>
        <end position="18"/>
    </location>
</feature>
<feature type="chain" id="PRO_5019825670" description="Bactericidal permeability-increasing protein" evidence="2">
    <location>
        <begin position="19"/>
        <end position="473"/>
    </location>
</feature>
<feature type="region of interest" description="Central sheet, part 1" evidence="1">
    <location>
        <begin position="19"/>
        <end position="29"/>
    </location>
</feature>
<feature type="region of interest" description="N-terminal barrel" evidence="1">
    <location>
        <begin position="28"/>
        <end position="209"/>
    </location>
</feature>
<feature type="region of interest" description="Central sheet, part 2" evidence="1">
    <location>
        <begin position="211"/>
        <end position="275"/>
    </location>
</feature>
<feature type="region of interest" description="Cleavage sites for elastase" evidence="2">
    <location>
        <begin position="225"/>
        <end position="230"/>
    </location>
</feature>
<feature type="region of interest" description="C-terminal barrel" evidence="1">
    <location>
        <begin position="276"/>
        <end position="446"/>
    </location>
</feature>
<feature type="region of interest" description="Central sheet, part 3" evidence="1">
    <location>
        <begin position="453"/>
        <end position="472"/>
    </location>
</feature>
<feature type="glycosylation site" description="N-linked (GlcNAc...) asparagine" evidence="4">
    <location>
        <position position="365"/>
    </location>
</feature>
<feature type="disulfide bond" evidence="3">
    <location>
        <begin position="153"/>
        <end position="192"/>
    </location>
</feature>
<feature type="sequence conflict" description="In Ref. 1; AQL41191." evidence="10" ref="1">
    <original>F</original>
    <variation>S</variation>
    <location>
        <position position="412"/>
    </location>
</feature>
<feature type="sequence conflict" description="In Ref. 1; AQL41191." evidence="10" ref="1">
    <original>V</original>
    <variation>A</variation>
    <location>
        <position position="429"/>
    </location>
</feature>
<feature type="sequence conflict" description="In Ref. 1; AQL41191." evidence="10" ref="1">
    <original>K</original>
    <variation>R</variation>
    <location>
        <position position="448"/>
    </location>
</feature>
<name>BPI_SEBSC</name>
<sequence length="473" mass="51467">MVLCCWLALVALIPMTLSINPGVKVRLTGKGLEYGRQLGMASIQQKLKTIKVPDISGKQRVSPIGKVKYSLSNMQIVDVGLPKSALDLVPGTGVKLSIGNAFLRMHGNWRVKYLRIIKDSGSFDLNVNDLTITTTIAIKSDETGRPVVSSVNCAATVGSAKIKFHGGASWLYNLFRKFVDKAIRNALQKQMCPLVANAVSDLNPQLKTLNVLAKVDQYAEIEYSMVSSPTVSNSCIDFSLKGEFYNIGKHQEPPFSPAAFSLPPQINNMLYISVSAFTINSAAFVYNTAGALSLYITDDMIPQASPIRLNTRTFGAFIPQVAKRFPGLMMKLLVKTAKNPVVTFEPNKVTVQATSTVTAYAIQPNTTLSPLFVLNLETSVSARVFVSGMRLAGAVTLNKMALTLGTSYVGEFQVRSLDSIFQVVLKVVVIPILNVQLAKGYPLPTLGKMKLVNTELQVLKDYMLIGTDVQFTG</sequence>
<evidence type="ECO:0000250" key="1">
    <source>
        <dbReference type="UniProtKB" id="P17213"/>
    </source>
</evidence>
<evidence type="ECO:0000255" key="2"/>
<evidence type="ECO:0000255" key="3">
    <source>
        <dbReference type="PIRSR" id="PIRSR002417-50"/>
    </source>
</evidence>
<evidence type="ECO:0000255" key="4">
    <source>
        <dbReference type="PROSITE-ProRule" id="PRU00498"/>
    </source>
</evidence>
<evidence type="ECO:0000255" key="5">
    <source>
        <dbReference type="RuleBase" id="RU369039"/>
    </source>
</evidence>
<evidence type="ECO:0000269" key="6">
    <source>
    </source>
</evidence>
<evidence type="ECO:0000269" key="7">
    <source>
    </source>
</evidence>
<evidence type="ECO:0000269" key="8">
    <source ref="1"/>
</evidence>
<evidence type="ECO:0000303" key="9">
    <source>
    </source>
</evidence>
<evidence type="ECO:0000305" key="10"/>
<evidence type="ECO:0000312" key="11">
    <source>
        <dbReference type="EMBL" id="AQL41191.1"/>
    </source>
</evidence>
<evidence type="ECO:0000312" key="12">
    <source>
        <dbReference type="EMBL" id="QAV52898.1"/>
    </source>
</evidence>
<proteinExistence type="evidence at protein level"/>